<gene>
    <name type="primary">ccpA</name>
    <name type="ordered locus">SE_1409</name>
</gene>
<sequence>MTVTIYDVAREARVSMATVSRVVNGNQNVKPETRNKVNEVIKRLNYRPNAVARGLASKRTTTVGVIIPDISNVYYSQLARGLEDIATMYKYHSIISNSDNDPEKEKEIFNNLLSKQVDGIIFLGGTISEEIKSLINQSSVPVVVSGTDGKDDHIASVNIDFKQAAEEATQYLIEKGAKTFSLIGGEYSIKAQDDVLEGLKNVLSQHQLKLDDTLHLTGNESYKSGIKTFEQLQSNLPDAVLCISDEQAIGILHSAQDAGVKVPEDLQIISFNNTRLVEMVRPQLSSVIQPLYDIGAVGMRLLTKYMNDEEIENPNVILPHRIEYRGTTQ</sequence>
<dbReference type="EMBL" id="AE015929">
    <property type="protein sequence ID" value="AAO05008.1"/>
    <property type="status" value="ALT_INIT"/>
    <property type="molecule type" value="Genomic_DNA"/>
</dbReference>
<dbReference type="RefSeq" id="NP_764964.1">
    <property type="nucleotide sequence ID" value="NC_004461.1"/>
</dbReference>
<dbReference type="RefSeq" id="WP_001830844.1">
    <property type="nucleotide sequence ID" value="NZ_WBME01000009.1"/>
</dbReference>
<dbReference type="SMR" id="Q8CNV8"/>
<dbReference type="GeneID" id="50018480"/>
<dbReference type="KEGG" id="sep:SE_1409"/>
<dbReference type="PATRIC" id="fig|176280.10.peg.1376"/>
<dbReference type="eggNOG" id="COG1609">
    <property type="taxonomic scope" value="Bacteria"/>
</dbReference>
<dbReference type="HOGENOM" id="CLU_037628_6_0_9"/>
<dbReference type="OrthoDB" id="9784962at2"/>
<dbReference type="Proteomes" id="UP000001411">
    <property type="component" value="Chromosome"/>
</dbReference>
<dbReference type="GO" id="GO:0003700">
    <property type="term" value="F:DNA-binding transcription factor activity"/>
    <property type="evidence" value="ECO:0007669"/>
    <property type="project" value="TreeGrafter"/>
</dbReference>
<dbReference type="GO" id="GO:0000976">
    <property type="term" value="F:transcription cis-regulatory region binding"/>
    <property type="evidence" value="ECO:0007669"/>
    <property type="project" value="TreeGrafter"/>
</dbReference>
<dbReference type="CDD" id="cd01392">
    <property type="entry name" value="HTH_LacI"/>
    <property type="match status" value="1"/>
</dbReference>
<dbReference type="FunFam" id="1.10.260.40:FF:000002">
    <property type="entry name" value="HTH-type transcriptional repressor PurR"/>
    <property type="match status" value="1"/>
</dbReference>
<dbReference type="Gene3D" id="3.40.50.2300">
    <property type="match status" value="2"/>
</dbReference>
<dbReference type="Gene3D" id="1.10.260.40">
    <property type="entry name" value="lambda repressor-like DNA-binding domains"/>
    <property type="match status" value="1"/>
</dbReference>
<dbReference type="InterPro" id="IPR006377">
    <property type="entry name" value="CcpA"/>
</dbReference>
<dbReference type="InterPro" id="IPR000843">
    <property type="entry name" value="HTH_LacI"/>
</dbReference>
<dbReference type="InterPro" id="IPR046335">
    <property type="entry name" value="LacI/GalR-like_sensor"/>
</dbReference>
<dbReference type="InterPro" id="IPR010982">
    <property type="entry name" value="Lambda_DNA-bd_dom_sf"/>
</dbReference>
<dbReference type="InterPro" id="IPR028082">
    <property type="entry name" value="Peripla_BP_I"/>
</dbReference>
<dbReference type="NCBIfam" id="TIGR01481">
    <property type="entry name" value="ccpA"/>
    <property type="match status" value="1"/>
</dbReference>
<dbReference type="PANTHER" id="PTHR30146:SF150">
    <property type="entry name" value="ARABINOSE METABOLISM TRANSCRIPTIONAL REPRESSOR"/>
    <property type="match status" value="1"/>
</dbReference>
<dbReference type="PANTHER" id="PTHR30146">
    <property type="entry name" value="LACI-RELATED TRANSCRIPTIONAL REPRESSOR"/>
    <property type="match status" value="1"/>
</dbReference>
<dbReference type="Pfam" id="PF00356">
    <property type="entry name" value="LacI"/>
    <property type="match status" value="1"/>
</dbReference>
<dbReference type="Pfam" id="PF13377">
    <property type="entry name" value="Peripla_BP_3"/>
    <property type="match status" value="1"/>
</dbReference>
<dbReference type="PRINTS" id="PR00036">
    <property type="entry name" value="HTHLACI"/>
</dbReference>
<dbReference type="SMART" id="SM00354">
    <property type="entry name" value="HTH_LACI"/>
    <property type="match status" value="1"/>
</dbReference>
<dbReference type="SUPFAM" id="SSF47413">
    <property type="entry name" value="lambda repressor-like DNA-binding domains"/>
    <property type="match status" value="1"/>
</dbReference>
<dbReference type="SUPFAM" id="SSF53822">
    <property type="entry name" value="Periplasmic binding protein-like I"/>
    <property type="match status" value="1"/>
</dbReference>
<dbReference type="PROSITE" id="PS00356">
    <property type="entry name" value="HTH_LACI_1"/>
    <property type="match status" value="1"/>
</dbReference>
<dbReference type="PROSITE" id="PS50932">
    <property type="entry name" value="HTH_LACI_2"/>
    <property type="match status" value="1"/>
</dbReference>
<feature type="chain" id="PRO_0000107932" description="Catabolite control protein A">
    <location>
        <begin position="1"/>
        <end position="329"/>
    </location>
</feature>
<feature type="domain" description="HTH lacI-type" evidence="2">
    <location>
        <begin position="1"/>
        <end position="57"/>
    </location>
</feature>
<feature type="DNA-binding region" description="H-T-H motif" evidence="2">
    <location>
        <begin position="5"/>
        <end position="24"/>
    </location>
</feature>
<name>CCPA_STAES</name>
<protein>
    <recommendedName>
        <fullName>Catabolite control protein A</fullName>
    </recommendedName>
</protein>
<proteinExistence type="inferred from homology"/>
<organism>
    <name type="scientific">Staphylococcus epidermidis (strain ATCC 12228 / FDA PCI 1200)</name>
    <dbReference type="NCBI Taxonomy" id="176280"/>
    <lineage>
        <taxon>Bacteria</taxon>
        <taxon>Bacillati</taxon>
        <taxon>Bacillota</taxon>
        <taxon>Bacilli</taxon>
        <taxon>Bacillales</taxon>
        <taxon>Staphylococcaceae</taxon>
        <taxon>Staphylococcus</taxon>
    </lineage>
</organism>
<evidence type="ECO:0000250" key="1"/>
<evidence type="ECO:0000255" key="2">
    <source>
        <dbReference type="PROSITE-ProRule" id="PRU00111"/>
    </source>
</evidence>
<evidence type="ECO:0000305" key="3"/>
<reference key="1">
    <citation type="journal article" date="2003" name="Mol. Microbiol.">
        <title>Genome-based analysis of virulence genes in a non-biofilm-forming Staphylococcus epidermidis strain (ATCC 12228).</title>
        <authorList>
            <person name="Zhang Y.-Q."/>
            <person name="Ren S.-X."/>
            <person name="Li H.-L."/>
            <person name="Wang Y.-X."/>
            <person name="Fu G."/>
            <person name="Yang J."/>
            <person name="Qin Z.-Q."/>
            <person name="Miao Y.-G."/>
            <person name="Wang W.-Y."/>
            <person name="Chen R.-S."/>
            <person name="Shen Y."/>
            <person name="Chen Z."/>
            <person name="Yuan Z.-H."/>
            <person name="Zhao G.-P."/>
            <person name="Qu D."/>
            <person name="Danchin A."/>
            <person name="Wen Y.-M."/>
        </authorList>
    </citation>
    <scope>NUCLEOTIDE SEQUENCE [LARGE SCALE GENOMIC DNA]</scope>
    <source>
        <strain>ATCC 12228 / FDA PCI 1200</strain>
    </source>
</reference>
<comment type="function">
    <text evidence="1">Global transcriptional regulator of carbon catabolite repression (CCR) and carbon catabolite activation (CCA), which ensures optimal energy usage under diverse conditions.</text>
</comment>
<comment type="sequence caution" evidence="3">
    <conflict type="erroneous initiation">
        <sequence resource="EMBL-CDS" id="AAO05008"/>
    </conflict>
    <text>Truncated N-terminus.</text>
</comment>
<keyword id="KW-0010">Activator</keyword>
<keyword id="KW-0238">DNA-binding</keyword>
<keyword id="KW-0678">Repressor</keyword>
<keyword id="KW-0804">Transcription</keyword>
<keyword id="KW-0805">Transcription regulation</keyword>
<accession>Q8CNV8</accession>